<evidence type="ECO:0000255" key="1">
    <source>
        <dbReference type="HAMAP-Rule" id="MF_01350"/>
    </source>
</evidence>
<keyword id="KW-0997">Cell inner membrane</keyword>
<keyword id="KW-1003">Cell membrane</keyword>
<keyword id="KW-0472">Membrane</keyword>
<keyword id="KW-0520">NAD</keyword>
<keyword id="KW-0874">Quinone</keyword>
<keyword id="KW-1278">Translocase</keyword>
<keyword id="KW-0812">Transmembrane</keyword>
<keyword id="KW-1133">Transmembrane helix</keyword>
<keyword id="KW-0830">Ubiquinone</keyword>
<organism>
    <name type="scientific">Francisella tularensis subsp. novicida (strain U112)</name>
    <dbReference type="NCBI Taxonomy" id="401614"/>
    <lineage>
        <taxon>Bacteria</taxon>
        <taxon>Pseudomonadati</taxon>
        <taxon>Pseudomonadota</taxon>
        <taxon>Gammaproteobacteria</taxon>
        <taxon>Thiotrichales</taxon>
        <taxon>Francisellaceae</taxon>
        <taxon>Francisella</taxon>
    </lineage>
</organism>
<dbReference type="EC" id="7.1.1.-" evidence="1"/>
<dbReference type="EMBL" id="CP000439">
    <property type="protein sequence ID" value="ABK90530.1"/>
    <property type="molecule type" value="Genomic_DNA"/>
</dbReference>
<dbReference type="RefSeq" id="WP_003017378.1">
    <property type="nucleotide sequence ID" value="NZ_CP009633.1"/>
</dbReference>
<dbReference type="SMR" id="A0Q8G5"/>
<dbReference type="KEGG" id="ftn:FTN_1673"/>
<dbReference type="KEGG" id="ftx:AW25_315"/>
<dbReference type="BioCyc" id="FTUL401614:G1G75-1734-MONOMER"/>
<dbReference type="Proteomes" id="UP000000762">
    <property type="component" value="Chromosome"/>
</dbReference>
<dbReference type="GO" id="GO:0005886">
    <property type="term" value="C:plasma membrane"/>
    <property type="evidence" value="ECO:0007669"/>
    <property type="project" value="UniProtKB-SubCell"/>
</dbReference>
<dbReference type="GO" id="GO:0003954">
    <property type="term" value="F:NADH dehydrogenase activity"/>
    <property type="evidence" value="ECO:0007669"/>
    <property type="project" value="TreeGrafter"/>
</dbReference>
<dbReference type="GO" id="GO:0016655">
    <property type="term" value="F:oxidoreductase activity, acting on NAD(P)H, quinone or similar compound as acceptor"/>
    <property type="evidence" value="ECO:0007669"/>
    <property type="project" value="UniProtKB-UniRule"/>
</dbReference>
<dbReference type="GO" id="GO:0048038">
    <property type="term" value="F:quinone binding"/>
    <property type="evidence" value="ECO:0007669"/>
    <property type="project" value="UniProtKB-KW"/>
</dbReference>
<dbReference type="GO" id="GO:0009060">
    <property type="term" value="P:aerobic respiration"/>
    <property type="evidence" value="ECO:0007669"/>
    <property type="project" value="TreeGrafter"/>
</dbReference>
<dbReference type="HAMAP" id="MF_01350">
    <property type="entry name" value="NDH1_NuoH"/>
    <property type="match status" value="1"/>
</dbReference>
<dbReference type="InterPro" id="IPR001694">
    <property type="entry name" value="NADH_UbQ_OxRdtase_su1/FPO"/>
</dbReference>
<dbReference type="InterPro" id="IPR018086">
    <property type="entry name" value="NADH_UbQ_OxRdtase_su1_CS"/>
</dbReference>
<dbReference type="NCBIfam" id="NF004741">
    <property type="entry name" value="PRK06076.1-2"/>
    <property type="match status" value="1"/>
</dbReference>
<dbReference type="PANTHER" id="PTHR11432">
    <property type="entry name" value="NADH DEHYDROGENASE SUBUNIT 1"/>
    <property type="match status" value="1"/>
</dbReference>
<dbReference type="PANTHER" id="PTHR11432:SF3">
    <property type="entry name" value="NADH-UBIQUINONE OXIDOREDUCTASE CHAIN 1"/>
    <property type="match status" value="1"/>
</dbReference>
<dbReference type="Pfam" id="PF00146">
    <property type="entry name" value="NADHdh"/>
    <property type="match status" value="1"/>
</dbReference>
<dbReference type="PROSITE" id="PS00667">
    <property type="entry name" value="COMPLEX1_ND1_1"/>
    <property type="match status" value="1"/>
</dbReference>
<dbReference type="PROSITE" id="PS00668">
    <property type="entry name" value="COMPLEX1_ND1_2"/>
    <property type="match status" value="1"/>
</dbReference>
<name>NUOH_FRATN</name>
<sequence>MLGYILWTSLYVLLIVIPLILVVAYYTYAERKVIGYMQDRIGPNRVGSFGLLQPIFDALKLFLKEIIVPTNSNRYLFFIAPILAFAPAYAAWAVIPFSKGVVLSDMNLGLLYILAMTSFSIYGIVIAGWASNSKYSLFGALRAGAQVISYELAMGFAIVGVVIAAGSMGITGIIEAQSGGIWHWYFIPLFPLFIVYFIAGIAETNRAPFDVVEGESEIVAGHHIEYTGSRFALFFLAEYANMILISILTSIMFLGGWNSPFQATALESIFGFVPGVVWLFAKTGIFMFMFLWVRATYPRYRYDQIMRLGWKIFIPLTFVWVVIVACMVRLGVGPWW</sequence>
<proteinExistence type="inferred from homology"/>
<comment type="function">
    <text evidence="1">NDH-1 shuttles electrons from NADH, via FMN and iron-sulfur (Fe-S) centers, to quinones in the respiratory chain. The immediate electron acceptor for the enzyme in this species is believed to be ubiquinone. Couples the redox reaction to proton translocation (for every two electrons transferred, four hydrogen ions are translocated across the cytoplasmic membrane), and thus conserves the redox energy in a proton gradient. This subunit may bind ubiquinone.</text>
</comment>
<comment type="catalytic activity">
    <reaction evidence="1">
        <text>a quinone + NADH + 5 H(+)(in) = a quinol + NAD(+) + 4 H(+)(out)</text>
        <dbReference type="Rhea" id="RHEA:57888"/>
        <dbReference type="ChEBI" id="CHEBI:15378"/>
        <dbReference type="ChEBI" id="CHEBI:24646"/>
        <dbReference type="ChEBI" id="CHEBI:57540"/>
        <dbReference type="ChEBI" id="CHEBI:57945"/>
        <dbReference type="ChEBI" id="CHEBI:132124"/>
    </reaction>
</comment>
<comment type="subunit">
    <text evidence="1">NDH-1 is composed of 14 different subunits. Subunits NuoA, H, J, K, L, M, N constitute the membrane sector of the complex.</text>
</comment>
<comment type="subcellular location">
    <subcellularLocation>
        <location evidence="1">Cell inner membrane</location>
        <topology evidence="1">Multi-pass membrane protein</topology>
    </subcellularLocation>
</comment>
<comment type="similarity">
    <text evidence="1">Belongs to the complex I subunit 1 family.</text>
</comment>
<protein>
    <recommendedName>
        <fullName evidence="1">NADH-quinone oxidoreductase subunit H</fullName>
        <ecNumber evidence="1">7.1.1.-</ecNumber>
    </recommendedName>
    <alternativeName>
        <fullName evidence="1">NADH dehydrogenase I subunit H</fullName>
    </alternativeName>
    <alternativeName>
        <fullName evidence="1">NDH-1 subunit H</fullName>
    </alternativeName>
</protein>
<reference key="1">
    <citation type="journal article" date="2007" name="Genome Biol.">
        <title>Comparison of Francisella tularensis genomes reveals evolutionary events associated with the emergence of human pathogenic strains.</title>
        <authorList>
            <person name="Rohmer L."/>
            <person name="Fong C."/>
            <person name="Abmayr S."/>
            <person name="Wasnick M."/>
            <person name="Larson Freeman T.J."/>
            <person name="Radey M."/>
            <person name="Guina T."/>
            <person name="Svensson K."/>
            <person name="Hayden H.S."/>
            <person name="Jacobs M."/>
            <person name="Gallagher L.A."/>
            <person name="Manoil C."/>
            <person name="Ernst R.K."/>
            <person name="Drees B."/>
            <person name="Buckley D."/>
            <person name="Haugen E."/>
            <person name="Bovee D."/>
            <person name="Zhou Y."/>
            <person name="Chang J."/>
            <person name="Levy R."/>
            <person name="Lim R."/>
            <person name="Gillett W."/>
            <person name="Guenthener D."/>
            <person name="Kang A."/>
            <person name="Shaffer S.A."/>
            <person name="Taylor G."/>
            <person name="Chen J."/>
            <person name="Gallis B."/>
            <person name="D'Argenio D.A."/>
            <person name="Forsman M."/>
            <person name="Olson M.V."/>
            <person name="Goodlett D.R."/>
            <person name="Kaul R."/>
            <person name="Miller S.I."/>
            <person name="Brittnacher M.J."/>
        </authorList>
    </citation>
    <scope>NUCLEOTIDE SEQUENCE [LARGE SCALE GENOMIC DNA]</scope>
    <source>
        <strain>U112</strain>
    </source>
</reference>
<feature type="chain" id="PRO_0000298813" description="NADH-quinone oxidoreductase subunit H">
    <location>
        <begin position="1"/>
        <end position="336"/>
    </location>
</feature>
<feature type="transmembrane region" description="Helical" evidence="1">
    <location>
        <begin position="4"/>
        <end position="24"/>
    </location>
</feature>
<feature type="transmembrane region" description="Helical" evidence="1">
    <location>
        <begin position="75"/>
        <end position="95"/>
    </location>
</feature>
<feature type="transmembrane region" description="Helical" evidence="1">
    <location>
        <begin position="108"/>
        <end position="128"/>
    </location>
</feature>
<feature type="transmembrane region" description="Helical" evidence="1">
    <location>
        <begin position="154"/>
        <end position="174"/>
    </location>
</feature>
<feature type="transmembrane region" description="Helical" evidence="1">
    <location>
        <begin position="181"/>
        <end position="201"/>
    </location>
</feature>
<feature type="transmembrane region" description="Helical" evidence="1">
    <location>
        <begin position="233"/>
        <end position="253"/>
    </location>
</feature>
<feature type="transmembrane region" description="Helical" evidence="1">
    <location>
        <begin position="272"/>
        <end position="292"/>
    </location>
</feature>
<feature type="transmembrane region" description="Helical" evidence="1">
    <location>
        <begin position="308"/>
        <end position="328"/>
    </location>
</feature>
<accession>A0Q8G5</accession>
<gene>
    <name evidence="1" type="primary">nuoH</name>
    <name type="ordered locus">FTN_1673</name>
</gene>